<name>GLO2_PROM1</name>
<reference key="1">
    <citation type="journal article" date="2007" name="PLoS Genet.">
        <title>Patterns and implications of gene gain and loss in the evolution of Prochlorococcus.</title>
        <authorList>
            <person name="Kettler G.C."/>
            <person name="Martiny A.C."/>
            <person name="Huang K."/>
            <person name="Zucker J."/>
            <person name="Coleman M.L."/>
            <person name="Rodrigue S."/>
            <person name="Chen F."/>
            <person name="Lapidus A."/>
            <person name="Ferriera S."/>
            <person name="Johnson J."/>
            <person name="Steglich C."/>
            <person name="Church G.M."/>
            <person name="Richardson P."/>
            <person name="Chisholm S.W."/>
        </authorList>
    </citation>
    <scope>NUCLEOTIDE SEQUENCE [LARGE SCALE GENOMIC DNA]</scope>
    <source>
        <strain>NATL1A</strain>
    </source>
</reference>
<proteinExistence type="inferred from homology"/>
<comment type="function">
    <text evidence="1">Thiolesterase that catalyzes the hydrolysis of S-D-lactoyl-glutathione to form glutathione and D-lactic acid.</text>
</comment>
<comment type="catalytic activity">
    <reaction evidence="1">
        <text>an S-(2-hydroxyacyl)glutathione + H2O = a 2-hydroxy carboxylate + glutathione + H(+)</text>
        <dbReference type="Rhea" id="RHEA:21864"/>
        <dbReference type="ChEBI" id="CHEBI:15377"/>
        <dbReference type="ChEBI" id="CHEBI:15378"/>
        <dbReference type="ChEBI" id="CHEBI:57925"/>
        <dbReference type="ChEBI" id="CHEBI:58896"/>
        <dbReference type="ChEBI" id="CHEBI:71261"/>
        <dbReference type="EC" id="3.1.2.6"/>
    </reaction>
</comment>
<comment type="cofactor">
    <cofactor evidence="1">
        <name>Zn(2+)</name>
        <dbReference type="ChEBI" id="CHEBI:29105"/>
    </cofactor>
    <text evidence="1">Binds 2 Zn(2+) ions per subunit.</text>
</comment>
<comment type="pathway">
    <text evidence="1">Secondary metabolite metabolism; methylglyoxal degradation; (R)-lactate from methylglyoxal: step 2/2.</text>
</comment>
<comment type="subunit">
    <text evidence="1">Monomer.</text>
</comment>
<comment type="similarity">
    <text evidence="1">Belongs to the metallo-beta-lactamase superfamily. Glyoxalase II family.</text>
</comment>
<feature type="chain" id="PRO_0000309681" description="Hydroxyacylglutathione hydrolase">
    <location>
        <begin position="1"/>
        <end position="251"/>
    </location>
</feature>
<feature type="binding site" evidence="1">
    <location>
        <position position="59"/>
    </location>
    <ligand>
        <name>Zn(2+)</name>
        <dbReference type="ChEBI" id="CHEBI:29105"/>
        <label>1</label>
    </ligand>
</feature>
<feature type="binding site" evidence="1">
    <location>
        <position position="61"/>
    </location>
    <ligand>
        <name>Zn(2+)</name>
        <dbReference type="ChEBI" id="CHEBI:29105"/>
        <label>1</label>
    </ligand>
</feature>
<feature type="binding site" evidence="1">
    <location>
        <position position="63"/>
    </location>
    <ligand>
        <name>Zn(2+)</name>
        <dbReference type="ChEBI" id="CHEBI:29105"/>
        <label>2</label>
    </ligand>
</feature>
<feature type="binding site" evidence="1">
    <location>
        <position position="64"/>
    </location>
    <ligand>
        <name>Zn(2+)</name>
        <dbReference type="ChEBI" id="CHEBI:29105"/>
        <label>2</label>
    </ligand>
</feature>
<feature type="binding site" evidence="1">
    <location>
        <position position="118"/>
    </location>
    <ligand>
        <name>Zn(2+)</name>
        <dbReference type="ChEBI" id="CHEBI:29105"/>
        <label>1</label>
    </ligand>
</feature>
<feature type="binding site" evidence="1">
    <location>
        <position position="141"/>
    </location>
    <ligand>
        <name>Zn(2+)</name>
        <dbReference type="ChEBI" id="CHEBI:29105"/>
        <label>1</label>
    </ligand>
</feature>
<feature type="binding site" evidence="1">
    <location>
        <position position="141"/>
    </location>
    <ligand>
        <name>Zn(2+)</name>
        <dbReference type="ChEBI" id="CHEBI:29105"/>
        <label>2</label>
    </ligand>
</feature>
<feature type="binding site" evidence="1">
    <location>
        <position position="179"/>
    </location>
    <ligand>
        <name>Zn(2+)</name>
        <dbReference type="ChEBI" id="CHEBI:29105"/>
        <label>2</label>
    </ligand>
</feature>
<keyword id="KW-0378">Hydrolase</keyword>
<keyword id="KW-0479">Metal-binding</keyword>
<keyword id="KW-0862">Zinc</keyword>
<accession>A2C116</accession>
<dbReference type="EC" id="3.1.2.6" evidence="1"/>
<dbReference type="EMBL" id="CP000553">
    <property type="protein sequence ID" value="ABM75176.1"/>
    <property type="molecule type" value="Genomic_DNA"/>
</dbReference>
<dbReference type="RefSeq" id="WP_011823342.1">
    <property type="nucleotide sequence ID" value="NC_008819.1"/>
</dbReference>
<dbReference type="SMR" id="A2C116"/>
<dbReference type="KEGG" id="pme:NATL1_06141"/>
<dbReference type="eggNOG" id="COG0491">
    <property type="taxonomic scope" value="Bacteria"/>
</dbReference>
<dbReference type="HOGENOM" id="CLU_030571_4_1_3"/>
<dbReference type="UniPathway" id="UPA00619">
    <property type="reaction ID" value="UER00676"/>
</dbReference>
<dbReference type="Proteomes" id="UP000002592">
    <property type="component" value="Chromosome"/>
</dbReference>
<dbReference type="GO" id="GO:0004416">
    <property type="term" value="F:hydroxyacylglutathione hydrolase activity"/>
    <property type="evidence" value="ECO:0007669"/>
    <property type="project" value="UniProtKB-UniRule"/>
</dbReference>
<dbReference type="GO" id="GO:0046872">
    <property type="term" value="F:metal ion binding"/>
    <property type="evidence" value="ECO:0007669"/>
    <property type="project" value="UniProtKB-KW"/>
</dbReference>
<dbReference type="GO" id="GO:0019243">
    <property type="term" value="P:methylglyoxal catabolic process to D-lactate via S-lactoyl-glutathione"/>
    <property type="evidence" value="ECO:0007669"/>
    <property type="project" value="InterPro"/>
</dbReference>
<dbReference type="CDD" id="cd07723">
    <property type="entry name" value="hydroxyacylglutathione_hydrolase_MBL-fold"/>
    <property type="match status" value="1"/>
</dbReference>
<dbReference type="Gene3D" id="3.60.15.10">
    <property type="entry name" value="Ribonuclease Z/Hydroxyacylglutathione hydrolase-like"/>
    <property type="match status" value="1"/>
</dbReference>
<dbReference type="HAMAP" id="MF_01374">
    <property type="entry name" value="Glyoxalase_2"/>
    <property type="match status" value="1"/>
</dbReference>
<dbReference type="InterPro" id="IPR035680">
    <property type="entry name" value="Clx_II_MBL"/>
</dbReference>
<dbReference type="InterPro" id="IPR050110">
    <property type="entry name" value="Glyoxalase_II_hydrolase"/>
</dbReference>
<dbReference type="InterPro" id="IPR032282">
    <property type="entry name" value="HAGH_C"/>
</dbReference>
<dbReference type="InterPro" id="IPR017782">
    <property type="entry name" value="Hydroxyacylglutathione_Hdrlase"/>
</dbReference>
<dbReference type="InterPro" id="IPR001279">
    <property type="entry name" value="Metallo-B-lactamas"/>
</dbReference>
<dbReference type="InterPro" id="IPR036866">
    <property type="entry name" value="RibonucZ/Hydroxyglut_hydro"/>
</dbReference>
<dbReference type="NCBIfam" id="TIGR03413">
    <property type="entry name" value="GSH_gloB"/>
    <property type="match status" value="1"/>
</dbReference>
<dbReference type="PANTHER" id="PTHR43705">
    <property type="entry name" value="HYDROXYACYLGLUTATHIONE HYDROLASE"/>
    <property type="match status" value="1"/>
</dbReference>
<dbReference type="PANTHER" id="PTHR43705:SF1">
    <property type="entry name" value="HYDROXYACYLGLUTATHIONE HYDROLASE GLOB"/>
    <property type="match status" value="1"/>
</dbReference>
<dbReference type="Pfam" id="PF16123">
    <property type="entry name" value="HAGH_C"/>
    <property type="match status" value="1"/>
</dbReference>
<dbReference type="Pfam" id="PF00753">
    <property type="entry name" value="Lactamase_B"/>
    <property type="match status" value="1"/>
</dbReference>
<dbReference type="PIRSF" id="PIRSF005457">
    <property type="entry name" value="Glx"/>
    <property type="match status" value="1"/>
</dbReference>
<dbReference type="SMART" id="SM00849">
    <property type="entry name" value="Lactamase_B"/>
    <property type="match status" value="1"/>
</dbReference>
<dbReference type="SUPFAM" id="SSF56281">
    <property type="entry name" value="Metallo-hydrolase/oxidoreductase"/>
    <property type="match status" value="1"/>
</dbReference>
<evidence type="ECO:0000255" key="1">
    <source>
        <dbReference type="HAMAP-Rule" id="MF_01374"/>
    </source>
</evidence>
<organism>
    <name type="scientific">Prochlorococcus marinus (strain NATL1A)</name>
    <dbReference type="NCBI Taxonomy" id="167555"/>
    <lineage>
        <taxon>Bacteria</taxon>
        <taxon>Bacillati</taxon>
        <taxon>Cyanobacteriota</taxon>
        <taxon>Cyanophyceae</taxon>
        <taxon>Synechococcales</taxon>
        <taxon>Prochlorococcaceae</taxon>
        <taxon>Prochlorococcus</taxon>
    </lineage>
</organism>
<gene>
    <name evidence="1" type="primary">gloB</name>
    <name type="ordered locus">NATL1_06141</name>
</gene>
<protein>
    <recommendedName>
        <fullName evidence="1">Hydroxyacylglutathione hydrolase</fullName>
        <ecNumber evidence="1">3.1.2.6</ecNumber>
    </recommendedName>
    <alternativeName>
        <fullName evidence="1">Glyoxalase II</fullName>
        <shortName evidence="1">Glx II</shortName>
    </alternativeName>
</protein>
<sequence length="251" mass="28692">MLGEKSDFTIHPINVLQDNIVWVWVHNCNAVVVDPSISGPVEKWLLEKNLSLKAILQTHHHDDHIGGTQKLIKTWPEAKVVASKKEHKRIPFQTFSVDDNDIFNLMDAEIKVIEVHGHTDNHIAFYISKQNAKCNILFPGDTLFGGGCGRLLEGSPVQMFESLYKLNSLPENTEIYPAHEYTESNLKWALSLEPGNISIIERLKLIQKKLQKGMSSLPSTLSEERKTNLFLIAENVEKFTMLRKHKDRWKC</sequence>